<feature type="chain" id="PRO_0000250922" description="NADH-quinone oxidoreductase subunit I 2">
    <location>
        <begin position="1"/>
        <end position="162"/>
    </location>
</feature>
<feature type="domain" description="4Fe-4S ferredoxin-type 1" evidence="1">
    <location>
        <begin position="53"/>
        <end position="83"/>
    </location>
</feature>
<feature type="domain" description="4Fe-4S ferredoxin-type 2" evidence="1">
    <location>
        <begin position="93"/>
        <end position="122"/>
    </location>
</feature>
<feature type="binding site" evidence="1">
    <location>
        <position position="63"/>
    </location>
    <ligand>
        <name>[4Fe-4S] cluster</name>
        <dbReference type="ChEBI" id="CHEBI:49883"/>
        <label>1</label>
    </ligand>
</feature>
<feature type="binding site" evidence="1">
    <location>
        <position position="66"/>
    </location>
    <ligand>
        <name>[4Fe-4S] cluster</name>
        <dbReference type="ChEBI" id="CHEBI:49883"/>
        <label>1</label>
    </ligand>
</feature>
<feature type="binding site" evidence="1">
    <location>
        <position position="69"/>
    </location>
    <ligand>
        <name>[4Fe-4S] cluster</name>
        <dbReference type="ChEBI" id="CHEBI:49883"/>
        <label>1</label>
    </ligand>
</feature>
<feature type="binding site" evidence="1">
    <location>
        <position position="73"/>
    </location>
    <ligand>
        <name>[4Fe-4S] cluster</name>
        <dbReference type="ChEBI" id="CHEBI:49883"/>
        <label>2</label>
    </ligand>
</feature>
<feature type="binding site" evidence="1">
    <location>
        <position position="102"/>
    </location>
    <ligand>
        <name>[4Fe-4S] cluster</name>
        <dbReference type="ChEBI" id="CHEBI:49883"/>
        <label>2</label>
    </ligand>
</feature>
<feature type="binding site" evidence="1">
    <location>
        <position position="105"/>
    </location>
    <ligand>
        <name>[4Fe-4S] cluster</name>
        <dbReference type="ChEBI" id="CHEBI:49883"/>
        <label>2</label>
    </ligand>
</feature>
<feature type="binding site" evidence="1">
    <location>
        <position position="108"/>
    </location>
    <ligand>
        <name>[4Fe-4S] cluster</name>
        <dbReference type="ChEBI" id="CHEBI:49883"/>
        <label>2</label>
    </ligand>
</feature>
<feature type="binding site" evidence="1">
    <location>
        <position position="112"/>
    </location>
    <ligand>
        <name>[4Fe-4S] cluster</name>
        <dbReference type="ChEBI" id="CHEBI:49883"/>
        <label>1</label>
    </ligand>
</feature>
<protein>
    <recommendedName>
        <fullName evidence="1">NADH-quinone oxidoreductase subunit I 2</fullName>
        <ecNumber evidence="1">7.1.1.-</ecNumber>
    </recommendedName>
    <alternativeName>
        <fullName evidence="1">NADH dehydrogenase I subunit I 2</fullName>
    </alternativeName>
    <alternativeName>
        <fullName evidence="1">NDH-1 subunit I 2</fullName>
    </alternativeName>
</protein>
<gene>
    <name evidence="1" type="primary">nuoI2</name>
    <name type="ordered locus">Nmul_A1099</name>
</gene>
<accession>Q2YA19</accession>
<keyword id="KW-0004">4Fe-4S</keyword>
<keyword id="KW-0997">Cell inner membrane</keyword>
<keyword id="KW-1003">Cell membrane</keyword>
<keyword id="KW-0408">Iron</keyword>
<keyword id="KW-0411">Iron-sulfur</keyword>
<keyword id="KW-0472">Membrane</keyword>
<keyword id="KW-0479">Metal-binding</keyword>
<keyword id="KW-0520">NAD</keyword>
<keyword id="KW-0874">Quinone</keyword>
<keyword id="KW-1185">Reference proteome</keyword>
<keyword id="KW-0677">Repeat</keyword>
<keyword id="KW-1278">Translocase</keyword>
<keyword id="KW-0830">Ubiquinone</keyword>
<sequence>MNRIKDFFRTFLLFELIKGMMLTGRNMFARKITVYFPEEKTPQSPRFRGLHALRRYPNGEERCIACKLCEAVCPALAITIESEQREDGTRRTTRYDIDLTKCIFCGFCEESCPVDSIVETRILEYHGEKRGDLIYTKQMLLAVGDRYEEQIAKDRAADAGYR</sequence>
<evidence type="ECO:0000255" key="1">
    <source>
        <dbReference type="HAMAP-Rule" id="MF_01351"/>
    </source>
</evidence>
<proteinExistence type="inferred from homology"/>
<name>NUOI2_NITMU</name>
<organism>
    <name type="scientific">Nitrosospira multiformis (strain ATCC 25196 / NCIMB 11849 / C 71)</name>
    <dbReference type="NCBI Taxonomy" id="323848"/>
    <lineage>
        <taxon>Bacteria</taxon>
        <taxon>Pseudomonadati</taxon>
        <taxon>Pseudomonadota</taxon>
        <taxon>Betaproteobacteria</taxon>
        <taxon>Nitrosomonadales</taxon>
        <taxon>Nitrosomonadaceae</taxon>
        <taxon>Nitrosospira</taxon>
    </lineage>
</organism>
<comment type="function">
    <text evidence="1">NDH-1 shuttles electrons from NADH, via FMN and iron-sulfur (Fe-S) centers, to quinones in the respiratory chain. The immediate electron acceptor for the enzyme in this species is believed to be ubiquinone. Couples the redox reaction to proton translocation (for every two electrons transferred, four hydrogen ions are translocated across the cytoplasmic membrane), and thus conserves the redox energy in a proton gradient.</text>
</comment>
<comment type="catalytic activity">
    <reaction evidence="1">
        <text>a quinone + NADH + 5 H(+)(in) = a quinol + NAD(+) + 4 H(+)(out)</text>
        <dbReference type="Rhea" id="RHEA:57888"/>
        <dbReference type="ChEBI" id="CHEBI:15378"/>
        <dbReference type="ChEBI" id="CHEBI:24646"/>
        <dbReference type="ChEBI" id="CHEBI:57540"/>
        <dbReference type="ChEBI" id="CHEBI:57945"/>
        <dbReference type="ChEBI" id="CHEBI:132124"/>
    </reaction>
</comment>
<comment type="cofactor">
    <cofactor evidence="1">
        <name>[4Fe-4S] cluster</name>
        <dbReference type="ChEBI" id="CHEBI:49883"/>
    </cofactor>
    <text evidence="1">Binds 2 [4Fe-4S] clusters per subunit.</text>
</comment>
<comment type="subunit">
    <text evidence="1">NDH-1 is composed of 14 different subunits. Subunits NuoA, H, J, K, L, M, N constitute the membrane sector of the complex.</text>
</comment>
<comment type="subcellular location">
    <subcellularLocation>
        <location evidence="1">Cell inner membrane</location>
        <topology evidence="1">Peripheral membrane protein</topology>
    </subcellularLocation>
</comment>
<comment type="similarity">
    <text evidence="1">Belongs to the complex I 23 kDa subunit family.</text>
</comment>
<reference key="1">
    <citation type="submission" date="2005-08" db="EMBL/GenBank/DDBJ databases">
        <title>Complete sequence of chromosome 1 of Nitrosospira multiformis ATCC 25196.</title>
        <authorList>
            <person name="Copeland A."/>
            <person name="Lucas S."/>
            <person name="Lapidus A."/>
            <person name="Barry K."/>
            <person name="Detter J.C."/>
            <person name="Glavina T."/>
            <person name="Hammon N."/>
            <person name="Israni S."/>
            <person name="Pitluck S."/>
            <person name="Chain P."/>
            <person name="Malfatti S."/>
            <person name="Shin M."/>
            <person name="Vergez L."/>
            <person name="Schmutz J."/>
            <person name="Larimer F."/>
            <person name="Land M."/>
            <person name="Hauser L."/>
            <person name="Kyrpides N."/>
            <person name="Lykidis A."/>
            <person name="Richardson P."/>
        </authorList>
    </citation>
    <scope>NUCLEOTIDE SEQUENCE [LARGE SCALE GENOMIC DNA]</scope>
    <source>
        <strain>ATCC 25196 / NCIMB 11849 / C 71</strain>
    </source>
</reference>
<dbReference type="EC" id="7.1.1.-" evidence="1"/>
<dbReference type="EMBL" id="CP000103">
    <property type="protein sequence ID" value="ABB74402.1"/>
    <property type="molecule type" value="Genomic_DNA"/>
</dbReference>
<dbReference type="RefSeq" id="WP_011380443.1">
    <property type="nucleotide sequence ID" value="NC_007614.1"/>
</dbReference>
<dbReference type="SMR" id="Q2YA19"/>
<dbReference type="STRING" id="323848.Nmul_A1099"/>
<dbReference type="KEGG" id="nmu:Nmul_A1099"/>
<dbReference type="eggNOG" id="COG1143">
    <property type="taxonomic scope" value="Bacteria"/>
</dbReference>
<dbReference type="HOGENOM" id="CLU_067218_5_1_4"/>
<dbReference type="OrthoDB" id="9808559at2"/>
<dbReference type="Proteomes" id="UP000002718">
    <property type="component" value="Chromosome"/>
</dbReference>
<dbReference type="GO" id="GO:0005886">
    <property type="term" value="C:plasma membrane"/>
    <property type="evidence" value="ECO:0007669"/>
    <property type="project" value="UniProtKB-SubCell"/>
</dbReference>
<dbReference type="GO" id="GO:0051539">
    <property type="term" value="F:4 iron, 4 sulfur cluster binding"/>
    <property type="evidence" value="ECO:0007669"/>
    <property type="project" value="UniProtKB-KW"/>
</dbReference>
<dbReference type="GO" id="GO:0005506">
    <property type="term" value="F:iron ion binding"/>
    <property type="evidence" value="ECO:0007669"/>
    <property type="project" value="UniProtKB-UniRule"/>
</dbReference>
<dbReference type="GO" id="GO:0050136">
    <property type="term" value="F:NADH:ubiquinone reductase (non-electrogenic) activity"/>
    <property type="evidence" value="ECO:0007669"/>
    <property type="project" value="UniProtKB-UniRule"/>
</dbReference>
<dbReference type="GO" id="GO:0048038">
    <property type="term" value="F:quinone binding"/>
    <property type="evidence" value="ECO:0007669"/>
    <property type="project" value="UniProtKB-KW"/>
</dbReference>
<dbReference type="GO" id="GO:0009060">
    <property type="term" value="P:aerobic respiration"/>
    <property type="evidence" value="ECO:0007669"/>
    <property type="project" value="TreeGrafter"/>
</dbReference>
<dbReference type="FunFam" id="3.30.70.3270:FF:000003">
    <property type="entry name" value="NADH-quinone oxidoreductase subunit I"/>
    <property type="match status" value="1"/>
</dbReference>
<dbReference type="Gene3D" id="3.30.70.3270">
    <property type="match status" value="1"/>
</dbReference>
<dbReference type="HAMAP" id="MF_01351">
    <property type="entry name" value="NDH1_NuoI"/>
    <property type="match status" value="1"/>
</dbReference>
<dbReference type="InterPro" id="IPR017896">
    <property type="entry name" value="4Fe4S_Fe-S-bd"/>
</dbReference>
<dbReference type="InterPro" id="IPR017900">
    <property type="entry name" value="4Fe4S_Fe_S_CS"/>
</dbReference>
<dbReference type="InterPro" id="IPR010226">
    <property type="entry name" value="NADH_quinone_OxRdtase_chainI"/>
</dbReference>
<dbReference type="NCBIfam" id="TIGR01971">
    <property type="entry name" value="NuoI"/>
    <property type="match status" value="1"/>
</dbReference>
<dbReference type="NCBIfam" id="NF004538">
    <property type="entry name" value="PRK05888.1-4"/>
    <property type="match status" value="1"/>
</dbReference>
<dbReference type="NCBIfam" id="NF004539">
    <property type="entry name" value="PRK05888.1-5"/>
    <property type="match status" value="1"/>
</dbReference>
<dbReference type="PANTHER" id="PTHR10849:SF20">
    <property type="entry name" value="NADH DEHYDROGENASE [UBIQUINONE] IRON-SULFUR PROTEIN 8, MITOCHONDRIAL"/>
    <property type="match status" value="1"/>
</dbReference>
<dbReference type="PANTHER" id="PTHR10849">
    <property type="entry name" value="NADH DEHYDROGENASE UBIQUINONE IRON-SULFUR PROTEIN 8, MITOCHONDRIAL"/>
    <property type="match status" value="1"/>
</dbReference>
<dbReference type="Pfam" id="PF12838">
    <property type="entry name" value="Fer4_7"/>
    <property type="match status" value="1"/>
</dbReference>
<dbReference type="SUPFAM" id="SSF54862">
    <property type="entry name" value="4Fe-4S ferredoxins"/>
    <property type="match status" value="1"/>
</dbReference>
<dbReference type="PROSITE" id="PS00198">
    <property type="entry name" value="4FE4S_FER_1"/>
    <property type="match status" value="2"/>
</dbReference>
<dbReference type="PROSITE" id="PS51379">
    <property type="entry name" value="4FE4S_FER_2"/>
    <property type="match status" value="2"/>
</dbReference>